<feature type="chain" id="PRO_0000350712" description="Digeranylgeranylglyceryl phosphate synthase">
    <location>
        <begin position="1"/>
        <end position="272"/>
    </location>
</feature>
<feature type="transmembrane region" description="Helical" evidence="1">
    <location>
        <begin position="16"/>
        <end position="36"/>
    </location>
</feature>
<feature type="transmembrane region" description="Helical" evidence="1">
    <location>
        <begin position="79"/>
        <end position="99"/>
    </location>
</feature>
<feature type="transmembrane region" description="Helical" evidence="1">
    <location>
        <begin position="100"/>
        <end position="120"/>
    </location>
</feature>
<feature type="transmembrane region" description="Helical" evidence="1">
    <location>
        <begin position="124"/>
        <end position="144"/>
    </location>
</feature>
<feature type="transmembrane region" description="Helical" evidence="1">
    <location>
        <begin position="148"/>
        <end position="168"/>
    </location>
</feature>
<feature type="transmembrane region" description="Helical" evidence="1">
    <location>
        <begin position="194"/>
        <end position="214"/>
    </location>
</feature>
<feature type="transmembrane region" description="Helical" evidence="1">
    <location>
        <begin position="217"/>
        <end position="237"/>
    </location>
</feature>
<feature type="transmembrane region" description="Helical" evidence="1">
    <location>
        <begin position="252"/>
        <end position="272"/>
    </location>
</feature>
<comment type="function">
    <text evidence="1">Prenyltransferase that catalyzes the transfer of the geranylgeranyl moiety of geranylgeranyl diphosphate (GGPP) to the C2 hydroxyl of (S)-3-O-geranylgeranylglyceryl phosphate (GGGP). This reaction is the second ether-bond-formation step in the biosynthesis of archaeal membrane lipids.</text>
</comment>
<comment type="catalytic activity">
    <reaction evidence="1">
        <text>sn-3-O-(geranylgeranyl)glycerol 1-phosphate + (2E,6E,10E)-geranylgeranyl diphosphate = 2,3-bis-O-(geranylgeranyl)-sn-glycerol 1-phosphate + diphosphate</text>
        <dbReference type="Rhea" id="RHEA:18109"/>
        <dbReference type="ChEBI" id="CHEBI:33019"/>
        <dbReference type="ChEBI" id="CHEBI:57677"/>
        <dbReference type="ChEBI" id="CHEBI:58756"/>
        <dbReference type="ChEBI" id="CHEBI:58837"/>
        <dbReference type="EC" id="2.5.1.42"/>
    </reaction>
</comment>
<comment type="cofactor">
    <cofactor evidence="1">
        <name>Mg(2+)</name>
        <dbReference type="ChEBI" id="CHEBI:18420"/>
    </cofactor>
</comment>
<comment type="pathway">
    <text evidence="1">Membrane lipid metabolism; glycerophospholipid metabolism.</text>
</comment>
<comment type="subcellular location">
    <subcellularLocation>
        <location evidence="1">Cell membrane</location>
        <topology evidence="1">Multi-pass membrane protein</topology>
    </subcellularLocation>
</comment>
<comment type="similarity">
    <text evidence="1">Belongs to the UbiA prenyltransferase family. DGGGP synthase subfamily.</text>
</comment>
<protein>
    <recommendedName>
        <fullName evidence="1">Digeranylgeranylglyceryl phosphate synthase</fullName>
        <shortName evidence="1">DGGGP synthase</shortName>
        <shortName evidence="1">DGGGPS</shortName>
        <ecNumber evidence="1">2.5.1.42</ecNumber>
    </recommendedName>
    <alternativeName>
        <fullName evidence="1">(S)-2,3-di-O-geranylgeranylglyceryl phosphate synthase</fullName>
    </alternativeName>
    <alternativeName>
        <fullName evidence="1">Geranylgeranylglycerol-phosphate geranylgeranyltransferase</fullName>
    </alternativeName>
</protein>
<sequence length="272" mass="30528">MNPYIEILRPTNALMAFIAVLLMAIIGHTYNYEIILGSLCVFIATGSGNTINDYYDYEIDRINAPNRPIPSGKIELKRALYYSLILFLVSIILGFIISLENGIVVILCTILMIIYAYDLKQRCFIGNLCVAILTGLTFVFGGLITKDVNLGFILGFFAFLMTLSREIIKDIEDIEGDKKEDAHTLPIIYGTKKAVMLAVILNIITCILSPLLYYYNIFSIVYLIIIIIADIIFVYSAYLAVQNQSKESMHKISKYMKIGMLIAFVSFAMGAL</sequence>
<accession>Q2NGM1</accession>
<keyword id="KW-1003">Cell membrane</keyword>
<keyword id="KW-0444">Lipid biosynthesis</keyword>
<keyword id="KW-0443">Lipid metabolism</keyword>
<keyword id="KW-0460">Magnesium</keyword>
<keyword id="KW-0472">Membrane</keyword>
<keyword id="KW-0594">Phospholipid biosynthesis</keyword>
<keyword id="KW-1208">Phospholipid metabolism</keyword>
<keyword id="KW-1185">Reference proteome</keyword>
<keyword id="KW-0808">Transferase</keyword>
<keyword id="KW-0812">Transmembrane</keyword>
<keyword id="KW-1133">Transmembrane helix</keyword>
<dbReference type="EC" id="2.5.1.42" evidence="1"/>
<dbReference type="EMBL" id="CP000102">
    <property type="protein sequence ID" value="ABC57032.1"/>
    <property type="molecule type" value="Genomic_DNA"/>
</dbReference>
<dbReference type="RefSeq" id="WP_011406232.1">
    <property type="nucleotide sequence ID" value="NC_007681.1"/>
</dbReference>
<dbReference type="SMR" id="Q2NGM1"/>
<dbReference type="STRING" id="339860.Msp_0634"/>
<dbReference type="KEGG" id="mst:Msp_0634"/>
<dbReference type="eggNOG" id="arCOG00476">
    <property type="taxonomic scope" value="Archaea"/>
</dbReference>
<dbReference type="HOGENOM" id="CLU_073311_1_1_2"/>
<dbReference type="OrthoDB" id="11851at2157"/>
<dbReference type="UniPathway" id="UPA00940"/>
<dbReference type="Proteomes" id="UP000001931">
    <property type="component" value="Chromosome"/>
</dbReference>
<dbReference type="GO" id="GO:0005886">
    <property type="term" value="C:plasma membrane"/>
    <property type="evidence" value="ECO:0007669"/>
    <property type="project" value="UniProtKB-SubCell"/>
</dbReference>
<dbReference type="GO" id="GO:0047295">
    <property type="term" value="F:geranylgeranylglycerol-phosphate geranylgeranyltransferase activity"/>
    <property type="evidence" value="ECO:0007669"/>
    <property type="project" value="UniProtKB-UniRule"/>
</dbReference>
<dbReference type="GO" id="GO:0000287">
    <property type="term" value="F:magnesium ion binding"/>
    <property type="evidence" value="ECO:0007669"/>
    <property type="project" value="UniProtKB-UniRule"/>
</dbReference>
<dbReference type="GO" id="GO:0046474">
    <property type="term" value="P:glycerophospholipid biosynthetic process"/>
    <property type="evidence" value="ECO:0007669"/>
    <property type="project" value="UniProtKB-UniRule"/>
</dbReference>
<dbReference type="CDD" id="cd13961">
    <property type="entry name" value="PT_UbiA_DGGGPS"/>
    <property type="match status" value="1"/>
</dbReference>
<dbReference type="Gene3D" id="1.10.357.140">
    <property type="entry name" value="UbiA prenyltransferase"/>
    <property type="match status" value="1"/>
</dbReference>
<dbReference type="Gene3D" id="1.20.120.1780">
    <property type="entry name" value="UbiA prenyltransferase"/>
    <property type="match status" value="1"/>
</dbReference>
<dbReference type="HAMAP" id="MF_01286">
    <property type="entry name" value="DGGGP_synth"/>
    <property type="match status" value="1"/>
</dbReference>
<dbReference type="InterPro" id="IPR023547">
    <property type="entry name" value="DGGGP_synth"/>
</dbReference>
<dbReference type="InterPro" id="IPR050475">
    <property type="entry name" value="Prenyltransferase_related"/>
</dbReference>
<dbReference type="InterPro" id="IPR000537">
    <property type="entry name" value="UbiA_prenyltransferase"/>
</dbReference>
<dbReference type="InterPro" id="IPR044878">
    <property type="entry name" value="UbiA_sf"/>
</dbReference>
<dbReference type="NCBIfam" id="NF009523">
    <property type="entry name" value="PRK12884.1"/>
    <property type="match status" value="1"/>
</dbReference>
<dbReference type="PANTHER" id="PTHR42723">
    <property type="entry name" value="CHLOROPHYLL SYNTHASE"/>
    <property type="match status" value="1"/>
</dbReference>
<dbReference type="PANTHER" id="PTHR42723:SF1">
    <property type="entry name" value="CHLOROPHYLL SYNTHASE, CHLOROPLASTIC"/>
    <property type="match status" value="1"/>
</dbReference>
<dbReference type="Pfam" id="PF01040">
    <property type="entry name" value="UbiA"/>
    <property type="match status" value="1"/>
</dbReference>
<name>DGGGP_METST</name>
<gene>
    <name type="ordered locus">Msp_0634</name>
</gene>
<organism>
    <name type="scientific">Methanosphaera stadtmanae (strain ATCC 43021 / DSM 3091 / JCM 11832 / MCB-3)</name>
    <dbReference type="NCBI Taxonomy" id="339860"/>
    <lineage>
        <taxon>Archaea</taxon>
        <taxon>Methanobacteriati</taxon>
        <taxon>Methanobacteriota</taxon>
        <taxon>Methanomada group</taxon>
        <taxon>Methanobacteria</taxon>
        <taxon>Methanobacteriales</taxon>
        <taxon>Methanobacteriaceae</taxon>
        <taxon>Methanosphaera</taxon>
    </lineage>
</organism>
<reference key="1">
    <citation type="journal article" date="2006" name="J. Bacteriol.">
        <title>The genome sequence of Methanosphaera stadtmanae reveals why this human intestinal archaeon is restricted to methanol and H2 for methane formation and ATP synthesis.</title>
        <authorList>
            <person name="Fricke W.F."/>
            <person name="Seedorf H."/>
            <person name="Henne A."/>
            <person name="Kruer M."/>
            <person name="Liesegang H."/>
            <person name="Hedderich R."/>
            <person name="Gottschalk G."/>
            <person name="Thauer R.K."/>
        </authorList>
    </citation>
    <scope>NUCLEOTIDE SEQUENCE [LARGE SCALE GENOMIC DNA]</scope>
    <source>
        <strain>ATCC 43021 / DSM 3091 / JCM 11832 / MCB-3</strain>
    </source>
</reference>
<proteinExistence type="inferred from homology"/>
<evidence type="ECO:0000255" key="1">
    <source>
        <dbReference type="HAMAP-Rule" id="MF_01286"/>
    </source>
</evidence>